<evidence type="ECO:0000255" key="1">
    <source>
        <dbReference type="HAMAP-Rule" id="MF_00517"/>
    </source>
</evidence>
<sequence>MTTNTVSRKVAWLRVVTLAVAAFIFNTTEFVPVGLLSDIAQSFHMQTAQVGIMLTIYAWVVALMSLPFMLMTSQVERRKLLICLFVVFIASHVLSFLSWSFTVLVISRIGVAFAHAIFWSITASLAIRMAPAGKRAQALSLIATGTALAMVLGLPLGRIVGQYFGWRMTFFAIGIGALITLLCLIKLLPLLPSEHSGSLKSLPLLFRRPALMSIYLLTVVVVTAHYTAYSYIEPFVQNIAGFSANFATALLLLLGGAGIIGSVIFGKLGNQYASALVSTAIALLLVCLALLLPAANSEIHLGVLSIFWGIAMMIIGLGMQVKVLALAPDATDVAMALFSGIFNIGIGAGALVGNQVSLHWSMSMIGYVGAVPAFAALIWSIIIFRRWPVTLEEQTQ</sequence>
<comment type="function">
    <text evidence="1">Involved in the efflux of sugars. The physiological role may be the reduction of the intracellular concentration of toxic sugars or sugar metabolites.</text>
</comment>
<comment type="subcellular location">
    <subcellularLocation>
        <location evidence="1">Cell inner membrane</location>
        <topology evidence="1">Multi-pass membrane protein</topology>
    </subcellularLocation>
</comment>
<comment type="similarity">
    <text evidence="1">Belongs to the major facilitator superfamily. SotB (TC 2.A.1.2) family.</text>
</comment>
<protein>
    <recommendedName>
        <fullName evidence="1">Probable sugar efflux transporter</fullName>
    </recommendedName>
</protein>
<organism>
    <name type="scientific">Escherichia coli O139:H28 (strain E24377A / ETEC)</name>
    <dbReference type="NCBI Taxonomy" id="331111"/>
    <lineage>
        <taxon>Bacteria</taxon>
        <taxon>Pseudomonadati</taxon>
        <taxon>Pseudomonadota</taxon>
        <taxon>Gammaproteobacteria</taxon>
        <taxon>Enterobacterales</taxon>
        <taxon>Enterobacteriaceae</taxon>
        <taxon>Escherichia</taxon>
    </lineage>
</organism>
<feature type="chain" id="PRO_1000060899" description="Probable sugar efflux transporter">
    <location>
        <begin position="1"/>
        <end position="396"/>
    </location>
</feature>
<feature type="transmembrane region" description="Helical" evidence="1">
    <location>
        <begin position="15"/>
        <end position="35"/>
    </location>
</feature>
<feature type="transmembrane region" description="Helical" evidence="1">
    <location>
        <begin position="50"/>
        <end position="70"/>
    </location>
</feature>
<feature type="transmembrane region" description="Helical" evidence="1">
    <location>
        <begin position="81"/>
        <end position="101"/>
    </location>
</feature>
<feature type="transmembrane region" description="Helical" evidence="1">
    <location>
        <begin position="103"/>
        <end position="123"/>
    </location>
</feature>
<feature type="transmembrane region" description="Helical" evidence="1">
    <location>
        <begin position="136"/>
        <end position="156"/>
    </location>
</feature>
<feature type="transmembrane region" description="Helical" evidence="1">
    <location>
        <begin position="170"/>
        <end position="190"/>
    </location>
</feature>
<feature type="transmembrane region" description="Helical" evidence="1">
    <location>
        <begin position="209"/>
        <end position="229"/>
    </location>
</feature>
<feature type="transmembrane region" description="Helical" evidence="1">
    <location>
        <begin position="246"/>
        <end position="266"/>
    </location>
</feature>
<feature type="transmembrane region" description="Helical" evidence="1">
    <location>
        <begin position="275"/>
        <end position="295"/>
    </location>
</feature>
<feature type="transmembrane region" description="Helical" evidence="1">
    <location>
        <begin position="299"/>
        <end position="319"/>
    </location>
</feature>
<feature type="transmembrane region" description="Helical" evidence="1">
    <location>
        <begin position="333"/>
        <end position="353"/>
    </location>
</feature>
<feature type="transmembrane region" description="Helical" evidence="1">
    <location>
        <begin position="364"/>
        <end position="384"/>
    </location>
</feature>
<keyword id="KW-0997">Cell inner membrane</keyword>
<keyword id="KW-1003">Cell membrane</keyword>
<keyword id="KW-0472">Membrane</keyword>
<keyword id="KW-1185">Reference proteome</keyword>
<keyword id="KW-0762">Sugar transport</keyword>
<keyword id="KW-0812">Transmembrane</keyword>
<keyword id="KW-1133">Transmembrane helix</keyword>
<keyword id="KW-0813">Transport</keyword>
<dbReference type="EMBL" id="CP000800">
    <property type="protein sequence ID" value="ABV21052.1"/>
    <property type="molecule type" value="Genomic_DNA"/>
</dbReference>
<dbReference type="SMR" id="A7ZLY4"/>
<dbReference type="KEGG" id="ecw:EcE24377A_1730"/>
<dbReference type="HOGENOM" id="CLU_001265_61_1_6"/>
<dbReference type="Proteomes" id="UP000001122">
    <property type="component" value="Chromosome"/>
</dbReference>
<dbReference type="GO" id="GO:0005886">
    <property type="term" value="C:plasma membrane"/>
    <property type="evidence" value="ECO:0007669"/>
    <property type="project" value="UniProtKB-SubCell"/>
</dbReference>
<dbReference type="GO" id="GO:0015144">
    <property type="term" value="F:carbohydrate transmembrane transporter activity"/>
    <property type="evidence" value="ECO:0007669"/>
    <property type="project" value="UniProtKB-UniRule"/>
</dbReference>
<dbReference type="CDD" id="cd17324">
    <property type="entry name" value="MFS_NepI_like"/>
    <property type="match status" value="1"/>
</dbReference>
<dbReference type="FunFam" id="1.20.1250.20:FF:000079">
    <property type="entry name" value="Probable sugar efflux transporter"/>
    <property type="match status" value="1"/>
</dbReference>
<dbReference type="Gene3D" id="1.20.1250.20">
    <property type="entry name" value="MFS general substrate transporter like domains"/>
    <property type="match status" value="1"/>
</dbReference>
<dbReference type="HAMAP" id="MF_00517">
    <property type="entry name" value="MFS_SotB"/>
    <property type="match status" value="1"/>
</dbReference>
<dbReference type="InterPro" id="IPR011701">
    <property type="entry name" value="MFS"/>
</dbReference>
<dbReference type="InterPro" id="IPR020846">
    <property type="entry name" value="MFS_dom"/>
</dbReference>
<dbReference type="InterPro" id="IPR050189">
    <property type="entry name" value="MFS_Efflux_Transporters"/>
</dbReference>
<dbReference type="InterPro" id="IPR036259">
    <property type="entry name" value="MFS_trans_sf"/>
</dbReference>
<dbReference type="InterPro" id="IPR023495">
    <property type="entry name" value="Sugar_effux_transptr_put"/>
</dbReference>
<dbReference type="NCBIfam" id="NF002921">
    <property type="entry name" value="PRK03545.1"/>
    <property type="match status" value="1"/>
</dbReference>
<dbReference type="PANTHER" id="PTHR43124">
    <property type="entry name" value="PURINE EFFLUX PUMP PBUE"/>
    <property type="match status" value="1"/>
</dbReference>
<dbReference type="PANTHER" id="PTHR43124:SF4">
    <property type="entry name" value="SUGAR EFFLUX TRANSPORTER"/>
    <property type="match status" value="1"/>
</dbReference>
<dbReference type="Pfam" id="PF07690">
    <property type="entry name" value="MFS_1"/>
    <property type="match status" value="1"/>
</dbReference>
<dbReference type="SUPFAM" id="SSF103473">
    <property type="entry name" value="MFS general substrate transporter"/>
    <property type="match status" value="1"/>
</dbReference>
<dbReference type="PROSITE" id="PS50850">
    <property type="entry name" value="MFS"/>
    <property type="match status" value="1"/>
</dbReference>
<gene>
    <name evidence="1" type="primary">sotB</name>
    <name type="ordered locus">EcE24377A_1730</name>
</gene>
<accession>A7ZLY4</accession>
<name>SOTB_ECO24</name>
<reference key="1">
    <citation type="journal article" date="2008" name="J. Bacteriol.">
        <title>The pangenome structure of Escherichia coli: comparative genomic analysis of E. coli commensal and pathogenic isolates.</title>
        <authorList>
            <person name="Rasko D.A."/>
            <person name="Rosovitz M.J."/>
            <person name="Myers G.S.A."/>
            <person name="Mongodin E.F."/>
            <person name="Fricke W.F."/>
            <person name="Gajer P."/>
            <person name="Crabtree J."/>
            <person name="Sebaihia M."/>
            <person name="Thomson N.R."/>
            <person name="Chaudhuri R."/>
            <person name="Henderson I.R."/>
            <person name="Sperandio V."/>
            <person name="Ravel J."/>
        </authorList>
    </citation>
    <scope>NUCLEOTIDE SEQUENCE [LARGE SCALE GENOMIC DNA]</scope>
    <source>
        <strain>E24377A / ETEC</strain>
    </source>
</reference>
<proteinExistence type="inferred from homology"/>